<reference key="1">
    <citation type="journal article" date="2005" name="Nat. Biotechnol.">
        <title>The complete genome sequence of the meat-borne lactic acid bacterium Lactobacillus sakei 23K.</title>
        <authorList>
            <person name="Chaillou S."/>
            <person name="Champomier-Verges M.-C."/>
            <person name="Cornet M."/>
            <person name="Crutz-Le Coq A.-M."/>
            <person name="Dudez A.-M."/>
            <person name="Martin V."/>
            <person name="Beaufils S."/>
            <person name="Darbon-Rongere E."/>
            <person name="Bossy R."/>
            <person name="Loux V."/>
            <person name="Zagorec M."/>
        </authorList>
    </citation>
    <scope>NUCLEOTIDE SEQUENCE [LARGE SCALE GENOMIC DNA]</scope>
    <source>
        <strain>23K</strain>
    </source>
</reference>
<accession>Q38YT8</accession>
<keyword id="KW-0227">DNA damage</keyword>
<keyword id="KW-0233">DNA recombination</keyword>
<keyword id="KW-0234">DNA repair</keyword>
<keyword id="KW-0479">Metal-binding</keyword>
<keyword id="KW-1185">Reference proteome</keyword>
<keyword id="KW-0862">Zinc</keyword>
<keyword id="KW-0863">Zinc-finger</keyword>
<comment type="function">
    <text evidence="1">May play a role in DNA repair. It seems to be involved in an RecBC-independent recombinational process of DNA repair. It may act with RecF and RecO.</text>
</comment>
<comment type="similarity">
    <text evidence="1">Belongs to the RecR family.</text>
</comment>
<gene>
    <name evidence="1" type="primary">recR</name>
    <name type="ordered locus">LCA_0338</name>
</gene>
<sequence length="198" mass="22051">MQYPEPIAKLIESYMKLPGIGNKTATRLAFYTIDMNEDDVTNFAKNLISARRDLHYCSVCGNITDEDPCEICRDTARSQEMILVVEQPKDVMSMERMNDYHGLYHVLHGVLSPIEGKGPDDINIANLIKRLQKTPAKEVIIATNATPEGEATAMYISRLIKPAGIKVTRLAHGLAVGSDIEYADEMTLLKAVEGRQEI</sequence>
<dbReference type="EMBL" id="CR936503">
    <property type="protein sequence ID" value="CAI54639.1"/>
    <property type="molecule type" value="Genomic_DNA"/>
</dbReference>
<dbReference type="RefSeq" id="WP_011374047.1">
    <property type="nucleotide sequence ID" value="NC_007576.1"/>
</dbReference>
<dbReference type="SMR" id="Q38YT8"/>
<dbReference type="STRING" id="314315.LCA_0338"/>
<dbReference type="GeneID" id="57133168"/>
<dbReference type="KEGG" id="lsa:LCA_0338"/>
<dbReference type="eggNOG" id="COG0353">
    <property type="taxonomic scope" value="Bacteria"/>
</dbReference>
<dbReference type="HOGENOM" id="CLU_060739_1_0_9"/>
<dbReference type="OrthoDB" id="9802672at2"/>
<dbReference type="Proteomes" id="UP000002707">
    <property type="component" value="Chromosome"/>
</dbReference>
<dbReference type="GO" id="GO:0003677">
    <property type="term" value="F:DNA binding"/>
    <property type="evidence" value="ECO:0007669"/>
    <property type="project" value="UniProtKB-UniRule"/>
</dbReference>
<dbReference type="GO" id="GO:0008270">
    <property type="term" value="F:zinc ion binding"/>
    <property type="evidence" value="ECO:0007669"/>
    <property type="project" value="UniProtKB-KW"/>
</dbReference>
<dbReference type="GO" id="GO:0006310">
    <property type="term" value="P:DNA recombination"/>
    <property type="evidence" value="ECO:0007669"/>
    <property type="project" value="UniProtKB-UniRule"/>
</dbReference>
<dbReference type="GO" id="GO:0006281">
    <property type="term" value="P:DNA repair"/>
    <property type="evidence" value="ECO:0007669"/>
    <property type="project" value="UniProtKB-UniRule"/>
</dbReference>
<dbReference type="CDD" id="cd01025">
    <property type="entry name" value="TOPRIM_recR"/>
    <property type="match status" value="1"/>
</dbReference>
<dbReference type="Gene3D" id="3.30.60.80">
    <property type="match status" value="1"/>
</dbReference>
<dbReference type="Gene3D" id="3.40.1360.10">
    <property type="match status" value="1"/>
</dbReference>
<dbReference type="Gene3D" id="6.10.250.240">
    <property type="match status" value="1"/>
</dbReference>
<dbReference type="Gene3D" id="1.10.8.420">
    <property type="entry name" value="RecR Domain 1"/>
    <property type="match status" value="1"/>
</dbReference>
<dbReference type="HAMAP" id="MF_00017">
    <property type="entry name" value="RecR"/>
    <property type="match status" value="1"/>
</dbReference>
<dbReference type="InterPro" id="IPR000093">
    <property type="entry name" value="DNA_Rcmb_RecR"/>
</dbReference>
<dbReference type="InterPro" id="IPR023627">
    <property type="entry name" value="Rcmb_RecR"/>
</dbReference>
<dbReference type="InterPro" id="IPR015967">
    <property type="entry name" value="Rcmb_RecR_Znf"/>
</dbReference>
<dbReference type="InterPro" id="IPR006171">
    <property type="entry name" value="TOPRIM_dom"/>
</dbReference>
<dbReference type="InterPro" id="IPR034137">
    <property type="entry name" value="TOPRIM_RecR"/>
</dbReference>
<dbReference type="NCBIfam" id="TIGR00615">
    <property type="entry name" value="recR"/>
    <property type="match status" value="1"/>
</dbReference>
<dbReference type="PANTHER" id="PTHR30446">
    <property type="entry name" value="RECOMBINATION PROTEIN RECR"/>
    <property type="match status" value="1"/>
</dbReference>
<dbReference type="PANTHER" id="PTHR30446:SF0">
    <property type="entry name" value="RECOMBINATION PROTEIN RECR"/>
    <property type="match status" value="1"/>
</dbReference>
<dbReference type="Pfam" id="PF21175">
    <property type="entry name" value="RecR_C"/>
    <property type="match status" value="1"/>
</dbReference>
<dbReference type="Pfam" id="PF21176">
    <property type="entry name" value="RecR_HhH"/>
    <property type="match status" value="1"/>
</dbReference>
<dbReference type="Pfam" id="PF02132">
    <property type="entry name" value="RecR_ZnF"/>
    <property type="match status" value="1"/>
</dbReference>
<dbReference type="Pfam" id="PF13662">
    <property type="entry name" value="Toprim_4"/>
    <property type="match status" value="1"/>
</dbReference>
<dbReference type="SMART" id="SM00493">
    <property type="entry name" value="TOPRIM"/>
    <property type="match status" value="1"/>
</dbReference>
<dbReference type="SUPFAM" id="SSF111304">
    <property type="entry name" value="Recombination protein RecR"/>
    <property type="match status" value="1"/>
</dbReference>
<dbReference type="PROSITE" id="PS01300">
    <property type="entry name" value="RECR"/>
    <property type="match status" value="1"/>
</dbReference>
<dbReference type="PROSITE" id="PS50880">
    <property type="entry name" value="TOPRIM"/>
    <property type="match status" value="1"/>
</dbReference>
<protein>
    <recommendedName>
        <fullName evidence="1">Recombination protein RecR</fullName>
    </recommendedName>
</protein>
<organism>
    <name type="scientific">Latilactobacillus sakei subsp. sakei (strain 23K)</name>
    <name type="common">Lactobacillus sakei subsp. sakei</name>
    <dbReference type="NCBI Taxonomy" id="314315"/>
    <lineage>
        <taxon>Bacteria</taxon>
        <taxon>Bacillati</taxon>
        <taxon>Bacillota</taxon>
        <taxon>Bacilli</taxon>
        <taxon>Lactobacillales</taxon>
        <taxon>Lactobacillaceae</taxon>
        <taxon>Latilactobacillus</taxon>
    </lineage>
</organism>
<evidence type="ECO:0000255" key="1">
    <source>
        <dbReference type="HAMAP-Rule" id="MF_00017"/>
    </source>
</evidence>
<proteinExistence type="inferred from homology"/>
<feature type="chain" id="PRO_1000001562" description="Recombination protein RecR">
    <location>
        <begin position="1"/>
        <end position="198"/>
    </location>
</feature>
<feature type="domain" description="Toprim" evidence="1">
    <location>
        <begin position="80"/>
        <end position="175"/>
    </location>
</feature>
<feature type="zinc finger region" description="C4-type" evidence="1">
    <location>
        <begin position="57"/>
        <end position="72"/>
    </location>
</feature>
<name>RECR_LATSS</name>